<feature type="chain" id="PRO_1000213584" description="UPF0201 protein M164_1168">
    <location>
        <begin position="1"/>
        <end position="145"/>
    </location>
</feature>
<evidence type="ECO:0000255" key="1">
    <source>
        <dbReference type="HAMAP-Rule" id="MF_01112"/>
    </source>
</evidence>
<dbReference type="EMBL" id="CP001402">
    <property type="protein sequence ID" value="ACR41772.1"/>
    <property type="molecule type" value="Genomic_DNA"/>
</dbReference>
<dbReference type="RefSeq" id="WP_012711201.1">
    <property type="nucleotide sequence ID" value="NC_012726.1"/>
</dbReference>
<dbReference type="SMR" id="C4KGQ8"/>
<dbReference type="KEGG" id="sid:M164_1168"/>
<dbReference type="HOGENOM" id="CLU_134829_1_0_2"/>
<dbReference type="Proteomes" id="UP000001479">
    <property type="component" value="Chromosome"/>
</dbReference>
<dbReference type="Gene3D" id="3.30.1440.10">
    <property type="match status" value="1"/>
</dbReference>
<dbReference type="HAMAP" id="MF_01112">
    <property type="entry name" value="UPF0201"/>
    <property type="match status" value="1"/>
</dbReference>
<dbReference type="InterPro" id="IPR002739">
    <property type="entry name" value="PAB1135-like"/>
</dbReference>
<dbReference type="InterPro" id="IPR022803">
    <property type="entry name" value="Ribosomal_uL5_dom_sf"/>
</dbReference>
<dbReference type="NCBIfam" id="NF001687">
    <property type="entry name" value="PRK00447.1"/>
    <property type="match status" value="1"/>
</dbReference>
<dbReference type="PANTHER" id="PTHR39652">
    <property type="entry name" value="UPF0201 PROTEIN TK1335"/>
    <property type="match status" value="1"/>
</dbReference>
<dbReference type="PANTHER" id="PTHR39652:SF1">
    <property type="entry name" value="UPF0201 PROTEIN TK1335"/>
    <property type="match status" value="1"/>
</dbReference>
<dbReference type="Pfam" id="PF01877">
    <property type="entry name" value="RNA_binding"/>
    <property type="match status" value="1"/>
</dbReference>
<dbReference type="SUPFAM" id="SSF55282">
    <property type="entry name" value="RL5-like"/>
    <property type="match status" value="1"/>
</dbReference>
<protein>
    <recommendedName>
        <fullName evidence="1">UPF0201 protein M164_1168</fullName>
    </recommendedName>
</protein>
<reference key="1">
    <citation type="journal article" date="2009" name="Proc. Natl. Acad. Sci. U.S.A.">
        <title>Biogeography of the Sulfolobus islandicus pan-genome.</title>
        <authorList>
            <person name="Reno M.L."/>
            <person name="Held N.L."/>
            <person name="Fields C.J."/>
            <person name="Burke P.V."/>
            <person name="Whitaker R.J."/>
        </authorList>
    </citation>
    <scope>NUCLEOTIDE SEQUENCE [LARGE SCALE GENOMIC DNA]</scope>
    <source>
        <strain>M.16.4 / Kamchatka #3</strain>
    </source>
</reference>
<comment type="similarity">
    <text evidence="1">Belongs to the UPF0201 family.</text>
</comment>
<proteinExistence type="inferred from homology"/>
<sequence length="145" mass="16448">MVKVMVVAEVRPSEDVNKVLSAISNFFDFEKTNTRKEGIIDILVLEARTLKSLLKFHRVLRNERILDSARKYLMKGIEGNTIAFMIHKQAAAVGVLSFVDNDKESPLGAIKFYIEYQNPKEVVDWLAPRTAHGVPLWDNPIPPDV</sequence>
<gene>
    <name type="ordered locus">M164_1168</name>
</gene>
<name>Y1168_SACI6</name>
<organism>
    <name type="scientific">Saccharolobus islandicus (strain M.16.4 / Kamchatka #3)</name>
    <name type="common">Sulfolobus islandicus</name>
    <dbReference type="NCBI Taxonomy" id="426118"/>
    <lineage>
        <taxon>Archaea</taxon>
        <taxon>Thermoproteota</taxon>
        <taxon>Thermoprotei</taxon>
        <taxon>Sulfolobales</taxon>
        <taxon>Sulfolobaceae</taxon>
        <taxon>Saccharolobus</taxon>
    </lineage>
</organism>
<accession>C4KGQ8</accession>